<organism>
    <name type="scientific">Xylella fastidiosa (strain M23)</name>
    <dbReference type="NCBI Taxonomy" id="405441"/>
    <lineage>
        <taxon>Bacteria</taxon>
        <taxon>Pseudomonadati</taxon>
        <taxon>Pseudomonadota</taxon>
        <taxon>Gammaproteobacteria</taxon>
        <taxon>Lysobacterales</taxon>
        <taxon>Lysobacteraceae</taxon>
        <taxon>Xylella</taxon>
    </lineage>
</organism>
<proteinExistence type="inferred from homology"/>
<dbReference type="EMBL" id="CP001011">
    <property type="protein sequence ID" value="ACB92136.1"/>
    <property type="molecule type" value="Genomic_DNA"/>
</dbReference>
<dbReference type="RefSeq" id="WP_004089149.1">
    <property type="nucleotide sequence ID" value="NC_010577.1"/>
</dbReference>
<dbReference type="SMR" id="B2I9X7"/>
<dbReference type="GeneID" id="93904439"/>
<dbReference type="KEGG" id="xfn:XfasM23_0695"/>
<dbReference type="HOGENOM" id="CLU_098920_0_0_6"/>
<dbReference type="Proteomes" id="UP000001698">
    <property type="component" value="Chromosome"/>
</dbReference>
<dbReference type="GO" id="GO:0005737">
    <property type="term" value="C:cytoplasm"/>
    <property type="evidence" value="ECO:0007669"/>
    <property type="project" value="UniProtKB-SubCell"/>
</dbReference>
<dbReference type="GO" id="GO:0005886">
    <property type="term" value="C:plasma membrane"/>
    <property type="evidence" value="ECO:0007669"/>
    <property type="project" value="UniProtKB-SubCell"/>
</dbReference>
<dbReference type="Gene3D" id="1.10.3890.10">
    <property type="entry name" value="HflD-like"/>
    <property type="match status" value="1"/>
</dbReference>
<dbReference type="HAMAP" id="MF_00695">
    <property type="entry name" value="HflD_protein"/>
    <property type="match status" value="1"/>
</dbReference>
<dbReference type="InterPro" id="IPR007451">
    <property type="entry name" value="HflD"/>
</dbReference>
<dbReference type="InterPro" id="IPR035932">
    <property type="entry name" value="HflD-like_sf"/>
</dbReference>
<dbReference type="NCBIfam" id="NF001246">
    <property type="entry name" value="PRK00218.1-2"/>
    <property type="match status" value="1"/>
</dbReference>
<dbReference type="NCBIfam" id="NF001250">
    <property type="entry name" value="PRK00218.1-6"/>
    <property type="match status" value="1"/>
</dbReference>
<dbReference type="PANTHER" id="PTHR38100">
    <property type="entry name" value="HIGH FREQUENCY LYSOGENIZATION PROTEIN HFLD"/>
    <property type="match status" value="1"/>
</dbReference>
<dbReference type="PANTHER" id="PTHR38100:SF1">
    <property type="entry name" value="HIGH FREQUENCY LYSOGENIZATION PROTEIN HFLD"/>
    <property type="match status" value="1"/>
</dbReference>
<dbReference type="Pfam" id="PF04356">
    <property type="entry name" value="DUF489"/>
    <property type="match status" value="1"/>
</dbReference>
<dbReference type="SUPFAM" id="SSF101322">
    <property type="entry name" value="YcfC-like"/>
    <property type="match status" value="1"/>
</dbReference>
<accession>B2I9X7</accession>
<sequence length="204" mass="22232">MNALIDNRVLALAGVVQALQQVRQIAETGQSETSAVRTAIDSVLRIDAESPEAVYGGIRNLTQGLQLLHDYFGNQLRDQLLPRLTLAVLQLERRFIRDTSIVAAVSTGITQAAHQVEQTGDSAHPEILSTLGALYANTISHLRPRIIVQGNPHYLGQAGVVAEIRAMLLAALRSAVLWRQLNGNLLDFLLTKRAMAAATERALR</sequence>
<gene>
    <name evidence="1" type="primary">hflD</name>
    <name type="ordered locus">XfasM23_0695</name>
</gene>
<comment type="subcellular location">
    <subcellularLocation>
        <location>Cytoplasm</location>
    </subcellularLocation>
    <subcellularLocation>
        <location evidence="1">Cell inner membrane</location>
        <topology evidence="1">Peripheral membrane protein</topology>
        <orientation evidence="1">Cytoplasmic side</orientation>
    </subcellularLocation>
</comment>
<comment type="similarity">
    <text evidence="1">Belongs to the HflD family.</text>
</comment>
<name>HFLD_XYLF2</name>
<reference key="1">
    <citation type="journal article" date="2010" name="J. Bacteriol.">
        <title>Whole genome sequences of two Xylella fastidiosa strains (M12 and M23) causing almond leaf scorch disease in California.</title>
        <authorList>
            <person name="Chen J."/>
            <person name="Xie G."/>
            <person name="Han S."/>
            <person name="Chertkov O."/>
            <person name="Sims D."/>
            <person name="Civerolo E.L."/>
        </authorList>
    </citation>
    <scope>NUCLEOTIDE SEQUENCE [LARGE SCALE GENOMIC DNA]</scope>
    <source>
        <strain>M23</strain>
    </source>
</reference>
<protein>
    <recommendedName>
        <fullName evidence="1">High frequency lysogenization protein HflD homolog</fullName>
    </recommendedName>
</protein>
<evidence type="ECO:0000255" key="1">
    <source>
        <dbReference type="HAMAP-Rule" id="MF_00695"/>
    </source>
</evidence>
<keyword id="KW-0997">Cell inner membrane</keyword>
<keyword id="KW-1003">Cell membrane</keyword>
<keyword id="KW-0963">Cytoplasm</keyword>
<keyword id="KW-0472">Membrane</keyword>
<feature type="chain" id="PRO_1000132308" description="High frequency lysogenization protein HflD homolog">
    <location>
        <begin position="1"/>
        <end position="204"/>
    </location>
</feature>